<organism>
    <name type="scientific">Trichoplusia ni ascovirus 2c</name>
    <name type="common">TnAV-2c</name>
    <dbReference type="NCBI Taxonomy" id="328615"/>
    <lineage>
        <taxon>Viruses</taxon>
        <taxon>Varidnaviria</taxon>
        <taxon>Bamfordvirae</taxon>
        <taxon>Nucleocytoviricota</taxon>
        <taxon>Megaviricetes</taxon>
        <taxon>Pimascovirales</taxon>
        <taxon>Ascoviridae</taxon>
        <taxon>Ascovirus</taxon>
    </lineage>
</organism>
<organismHost>
    <name type="scientific">Noctuidae</name>
    <name type="common">owlet moths</name>
    <dbReference type="NCBI Taxonomy" id="7100"/>
</organismHost>
<sequence length="228" mass="26497">MNSKYDYFYEIDTRYDDDDYDDDELIIHISKEDEQFLNLNSTHYDCEDDEEKEEVHGFPELPDKLTCPPAVSLKHILMDEEAATSTTPTVILGDVSKHTRPCDVTSKYCNDSRCVSTKLDGIWTTKQCKLKHIGESEENYCLRLGTLRNDNEQIPKLKVNQHPSQCIIEFIATCMRDCGPKLKSLDIIVSPTETLSEHFANRFDLHKDIIENHSDNSMMDTELDYYYY</sequence>
<gene>
    <name type="ORF">ORF150</name>
</gene>
<protein>
    <recommendedName>
        <fullName>Uncharacterized protein ORF150</fullName>
    </recommendedName>
</protein>
<accession>Q06VD3</accession>
<proteinExistence type="inferred from homology"/>
<name>Y150_TNAVC</name>
<comment type="similarity">
    <text evidence="1">Belongs to the ascovirus HvAv ORF57 family.</text>
</comment>
<keyword id="KW-1185">Reference proteome</keyword>
<feature type="chain" id="PRO_0000332715" description="Uncharacterized protein ORF150">
    <location>
        <begin position="1"/>
        <end position="228"/>
    </location>
</feature>
<dbReference type="EMBL" id="DQ517337">
    <property type="protein sequence ID" value="ABF70666.1"/>
    <property type="molecule type" value="Genomic_DNA"/>
</dbReference>
<dbReference type="RefSeq" id="YP_803372.1">
    <property type="nucleotide sequence ID" value="NC_008518.1"/>
</dbReference>
<dbReference type="KEGG" id="vg:5141706"/>
<dbReference type="Proteomes" id="UP000001323">
    <property type="component" value="Genome"/>
</dbReference>
<evidence type="ECO:0000305" key="1"/>
<reference key="1">
    <citation type="journal article" date="2006" name="Virology">
        <title>Sequence and organization of the Trichoplusia ni ascovirus 2c (Ascoviridae) genome.</title>
        <authorList>
            <person name="Wang L."/>
            <person name="Xue J."/>
            <person name="Seaborn C.P."/>
            <person name="Arif B.M."/>
            <person name="Cheng X.W."/>
        </authorList>
    </citation>
    <scope>NUCLEOTIDE SEQUENCE [LARGE SCALE GENOMIC DNA]</scope>
</reference>